<reference key="1">
    <citation type="journal article" date="2006" name="Toxicon">
        <title>New caerin antibiotic peptides from the skin secretion of the dainty green tree frog Litoria gracilenta. Identification using positive and negative ion electrospray mass spectrometry.</title>
        <authorList>
            <person name="Maclean M.J."/>
            <person name="Brinkworth C.S."/>
            <person name="Bilusich D."/>
            <person name="Bowie J.H."/>
            <person name="Doyle J.R."/>
            <person name="Llewellyn L.E."/>
            <person name="Tyler M.J."/>
        </authorList>
    </citation>
    <scope>PROTEIN SEQUENCE</scope>
    <scope>FUNCTION</scope>
    <scope>AMIDATION AT LEU-25</scope>
    <scope>MASS SPECTROMETRY</scope>
    <scope>SYNTHESIS OF 1-25</scope>
    <source>
        <tissue>Skin secretion</tissue>
    </source>
</reference>
<organism>
    <name type="scientific">Ranoidea gracilenta</name>
    <name type="common">Dainty green tree frog</name>
    <name type="synonym">Litoria gracilenta</name>
    <dbReference type="NCBI Taxonomy" id="95133"/>
    <lineage>
        <taxon>Eukaryota</taxon>
        <taxon>Metazoa</taxon>
        <taxon>Chordata</taxon>
        <taxon>Craniata</taxon>
        <taxon>Vertebrata</taxon>
        <taxon>Euteleostomi</taxon>
        <taxon>Amphibia</taxon>
        <taxon>Batrachia</taxon>
        <taxon>Anura</taxon>
        <taxon>Neobatrachia</taxon>
        <taxon>Hyloidea</taxon>
        <taxon>Hylidae</taxon>
        <taxon>Pelodryadinae</taxon>
        <taxon>Ranoidea</taxon>
    </lineage>
</organism>
<evidence type="ECO:0000269" key="1">
    <source>
    </source>
</evidence>
<evidence type="ECO:0000305" key="2"/>
<comment type="function">
    <text evidence="1">Caerin-1.17 shows significant activity against Gram-positive organisms, but is less effective against Gram-negative organisms.</text>
</comment>
<comment type="subcellular location">
    <subcellularLocation>
        <location>Secreted</location>
    </subcellularLocation>
</comment>
<comment type="tissue specificity">
    <text>Expressed by the skin dorsal glands.</text>
</comment>
<comment type="mass spectrometry" mass="2606.0" method="Electrospray" evidence="1">
    <molecule>Caerin-1.17</molecule>
</comment>
<comment type="mass spectrometry" mass="2437.0" method="Electrospray" evidence="1">
    <molecule>Caerin-1.17.1</molecule>
</comment>
<comment type="mass spectrometry" mass="2290.0" method="Electrospray" evidence="1">
    <molecule>Caerin-1.17.2</molecule>
</comment>
<comment type="similarity">
    <text evidence="2">Belongs to the frog skin active peptide (FSAP) family. Caerin subfamily.</text>
</comment>
<accession>P0C2A6</accession>
<dbReference type="SMR" id="P0C2A6"/>
<dbReference type="GO" id="GO:0005576">
    <property type="term" value="C:extracellular region"/>
    <property type="evidence" value="ECO:0007669"/>
    <property type="project" value="UniProtKB-SubCell"/>
</dbReference>
<dbReference type="GO" id="GO:0042742">
    <property type="term" value="P:defense response to bacterium"/>
    <property type="evidence" value="ECO:0007669"/>
    <property type="project" value="UniProtKB-KW"/>
</dbReference>
<dbReference type="InterPro" id="IPR010000">
    <property type="entry name" value="Caerin_1"/>
</dbReference>
<dbReference type="Pfam" id="PF07440">
    <property type="entry name" value="Caerin_1"/>
    <property type="match status" value="1"/>
</dbReference>
<feature type="peptide" id="PRO_0000271466" description="Caerin-1.17">
    <location>
        <begin position="1"/>
        <end position="25"/>
    </location>
</feature>
<feature type="peptide" id="PRO_0000271467" description="Caerin-1.17.1">
    <location>
        <begin position="3"/>
        <end position="25"/>
    </location>
</feature>
<feature type="peptide" id="PRO_0000271468" description="Caerin-1.17.2">
    <location>
        <begin position="4"/>
        <end position="25"/>
    </location>
</feature>
<feature type="modified residue" description="Leucine amide" evidence="1">
    <location>
        <position position="25"/>
    </location>
</feature>
<protein>
    <recommendedName>
        <fullName>Caerin-1.17</fullName>
    </recommendedName>
    <component>
        <recommendedName>
            <fullName>Caerin-1.17.1</fullName>
        </recommendedName>
    </component>
    <component>
        <recommendedName>
            <fullName>Caerin-1.17.2</fullName>
        </recommendedName>
    </component>
</protein>
<name>CR117_RANGR</name>
<proteinExistence type="evidence at protein level"/>
<keyword id="KW-0027">Amidation</keyword>
<keyword id="KW-0878">Amphibian defense peptide</keyword>
<keyword id="KW-0044">Antibiotic</keyword>
<keyword id="KW-0929">Antimicrobial</keyword>
<keyword id="KW-0903">Direct protein sequencing</keyword>
<keyword id="KW-0964">Secreted</keyword>
<sequence length="25" mass="2610">GLFSVLGSVAKHLLPHVAPIIAEKL</sequence>